<feature type="signal peptide" evidence="5">
    <location>
        <begin position="1"/>
        <end position="19"/>
    </location>
</feature>
<feature type="chain" id="PRO_0000418007" description="Lysyl oxidase homolog 2">
    <location>
        <begin position="20"/>
        <end position="767"/>
    </location>
</feature>
<feature type="domain" description="SRCR 1" evidence="6">
    <location>
        <begin position="51"/>
        <end position="152"/>
    </location>
</feature>
<feature type="domain" description="SRCR 2" evidence="6">
    <location>
        <begin position="181"/>
        <end position="295"/>
    </location>
</feature>
<feature type="domain" description="SRCR 3" evidence="6">
    <location>
        <begin position="319"/>
        <end position="418"/>
    </location>
</feature>
<feature type="domain" description="SRCR 4" evidence="6">
    <location>
        <begin position="428"/>
        <end position="537"/>
    </location>
</feature>
<feature type="region of interest" description="Lysyl-oxidase like" evidence="1">
    <location>
        <begin position="541"/>
        <end position="744"/>
    </location>
</feature>
<feature type="binding site" evidence="4">
    <location>
        <position position="542"/>
    </location>
    <ligand>
        <name>Ca(2+)</name>
        <dbReference type="ChEBI" id="CHEBI:29108"/>
    </ligand>
</feature>
<feature type="binding site" evidence="4">
    <location>
        <position position="543"/>
    </location>
    <ligand>
        <name>Ca(2+)</name>
        <dbReference type="ChEBI" id="CHEBI:29108"/>
    </ligand>
</feature>
<feature type="binding site" evidence="4">
    <location>
        <position position="619"/>
    </location>
    <ligand>
        <name>Cu cation</name>
        <dbReference type="ChEBI" id="CHEBI:23378"/>
    </ligand>
</feature>
<feature type="binding site" evidence="4">
    <location>
        <position position="621"/>
    </location>
    <ligand>
        <name>Cu cation</name>
        <dbReference type="ChEBI" id="CHEBI:23378"/>
    </ligand>
</feature>
<feature type="binding site" evidence="4">
    <location>
        <position position="623"/>
    </location>
    <ligand>
        <name>Cu cation</name>
        <dbReference type="ChEBI" id="CHEBI:23378"/>
    </ligand>
</feature>
<feature type="binding site" evidence="4">
    <location>
        <position position="715"/>
    </location>
    <ligand>
        <name>Ca(2+)</name>
        <dbReference type="ChEBI" id="CHEBI:29108"/>
    </ligand>
</feature>
<feature type="binding site" evidence="4">
    <location>
        <position position="717"/>
    </location>
    <ligand>
        <name>Ca(2+)</name>
        <dbReference type="ChEBI" id="CHEBI:29108"/>
    </ligand>
</feature>
<feature type="binding site" evidence="4">
    <location>
        <position position="720"/>
    </location>
    <ligand>
        <name>Ca(2+)</name>
        <dbReference type="ChEBI" id="CHEBI:29108"/>
    </ligand>
</feature>
<feature type="binding site" evidence="4">
    <location>
        <position position="721"/>
    </location>
    <ligand>
        <name>Ca(2+)</name>
        <dbReference type="ChEBI" id="CHEBI:29108"/>
    </ligand>
</feature>
<feature type="modified residue" description="2',4',5'-topaquinone" evidence="2">
    <location>
        <position position="682"/>
    </location>
</feature>
<feature type="glycosylation site" description="N-linked (GlcNAc...) asparagine" evidence="5">
    <location>
        <position position="281"/>
    </location>
</feature>
<feature type="glycosylation site" description="N-linked (GlcNAc...) asparagine" evidence="5">
    <location>
        <position position="448"/>
    </location>
</feature>
<feature type="glycosylation site" description="N-linked (GlcNAc...) asparagine" evidence="5">
    <location>
        <position position="637"/>
    </location>
</feature>
<feature type="disulfide bond" evidence="6">
    <location>
        <begin position="77"/>
        <end position="141"/>
    </location>
</feature>
<feature type="disulfide bond" evidence="6">
    <location>
        <begin position="90"/>
        <end position="151"/>
    </location>
</feature>
<feature type="disulfide bond" evidence="6">
    <location>
        <begin position="121"/>
        <end position="131"/>
    </location>
</feature>
<feature type="disulfide bond" evidence="6">
    <location>
        <begin position="211"/>
        <end position="284"/>
    </location>
</feature>
<feature type="disulfide bond" evidence="6">
    <location>
        <begin position="224"/>
        <end position="294"/>
    </location>
</feature>
<feature type="disulfide bond" evidence="6">
    <location>
        <begin position="258"/>
        <end position="268"/>
    </location>
</feature>
<feature type="disulfide bond" evidence="6">
    <location>
        <begin position="344"/>
        <end position="407"/>
    </location>
</feature>
<feature type="disulfide bond" evidence="6">
    <location>
        <begin position="357"/>
        <end position="417"/>
    </location>
</feature>
<feature type="disulfide bond" evidence="6">
    <location>
        <begin position="388"/>
        <end position="398"/>
    </location>
</feature>
<feature type="disulfide bond" evidence="6">
    <location>
        <begin position="457"/>
        <end position="523"/>
    </location>
</feature>
<feature type="disulfide bond" evidence="6">
    <location>
        <begin position="470"/>
        <end position="536"/>
    </location>
</feature>
<feature type="disulfide bond" evidence="6">
    <location>
        <begin position="504"/>
        <end position="514"/>
    </location>
</feature>
<feature type="disulfide bond" evidence="4">
    <location>
        <begin position="566"/>
        <end position="618"/>
    </location>
</feature>
<feature type="disulfide bond" evidence="4">
    <location>
        <begin position="572"/>
        <end position="688"/>
    </location>
</feature>
<feature type="disulfide bond" evidence="4">
    <location>
        <begin position="650"/>
        <end position="666"/>
    </location>
</feature>
<feature type="disulfide bond" evidence="4">
    <location>
        <begin position="656"/>
        <end position="678"/>
    </location>
</feature>
<feature type="disulfide bond" evidence="6">
    <location>
        <begin position="725"/>
        <end position="739"/>
    </location>
</feature>
<feature type="cross-link" description="Lysine tyrosylquinone (Lys-Tyr)" evidence="2">
    <location>
        <begin position="646"/>
        <end position="682"/>
    </location>
</feature>
<feature type="sequence conflict" description="In Ref. 2; AAI67947." evidence="7" ref="2">
    <original>G</original>
    <variation>R</variation>
    <location>
        <position position="309"/>
    </location>
</feature>
<proteinExistence type="evidence at transcript level"/>
<evidence type="ECO:0000250" key="1"/>
<evidence type="ECO:0000250" key="2">
    <source>
        <dbReference type="UniProtKB" id="P33072"/>
    </source>
</evidence>
<evidence type="ECO:0000250" key="3">
    <source>
        <dbReference type="UniProtKB" id="P58022"/>
    </source>
</evidence>
<evidence type="ECO:0000250" key="4">
    <source>
        <dbReference type="UniProtKB" id="Q9Y4K0"/>
    </source>
</evidence>
<evidence type="ECO:0000255" key="5"/>
<evidence type="ECO:0000255" key="6">
    <source>
        <dbReference type="PROSITE-ProRule" id="PRU00196"/>
    </source>
</evidence>
<evidence type="ECO:0000305" key="7"/>
<keyword id="KW-0084">Basement membrane</keyword>
<keyword id="KW-0106">Calcium</keyword>
<keyword id="KW-0156">Chromatin regulator</keyword>
<keyword id="KW-0158">Chromosome</keyword>
<keyword id="KW-0186">Copper</keyword>
<keyword id="KW-1015">Disulfide bond</keyword>
<keyword id="KW-0256">Endoplasmic reticulum</keyword>
<keyword id="KW-0272">Extracellular matrix</keyword>
<keyword id="KW-0325">Glycoprotein</keyword>
<keyword id="KW-0886">LTQ</keyword>
<keyword id="KW-0479">Metal-binding</keyword>
<keyword id="KW-0539">Nucleus</keyword>
<keyword id="KW-0560">Oxidoreductase</keyword>
<keyword id="KW-1185">Reference proteome</keyword>
<keyword id="KW-0677">Repeat</keyword>
<keyword id="KW-0678">Repressor</keyword>
<keyword id="KW-0964">Secreted</keyword>
<keyword id="KW-0732">Signal</keyword>
<keyword id="KW-0801">TPQ</keyword>
<keyword id="KW-0804">Transcription</keyword>
<keyword id="KW-0805">Transcription regulation</keyword>
<sequence length="767" mass="85683">MLVTHIFLLTLSLSVPTLGQYEHWLYYPEYQASQAPEPLPTPARNVPQIHVRLAGEKRKHNEGRVEVYYEGEWGTVCDDDFSMYAAHIVCRELGYQDAVSWSPSSKYGKGEGRIWLDNVNCNGREKSIASCGSNGWGVTDCKHSEDVGVQCSDRRIPGFKVSNELPGQLEGLNIQVEEVRIRAILSAYRKRVPVTEGFVEVKVQGSWRQVCNAEWSSKNSRVVCGMFGFPAEKKFNNKVYKLFSSRRKHTYWQFSANCTGNEAHLSSCKVGGVLTPDPKTNQTCSDGSPAVVSCTPGRAFAPSPGTGFGKAFRQEQPLVRLRGGANTGEGRVEVLKNGEWGTICDDKWNLVTASVVCRELGFGSAKEALAGAQMGQGMGHIHMSEIQCNGFEKSLIDCKFNVHSQGCNHEEDAAVRCNVPAMGFENQVRLSGGRHPTEGRVEVLMERNGTLRWGTVCSDTWGTMEAMIVCRQLGLGFASHAFQETWYWQGDINADDVVMSGVKCSGTEMSLAHCRHDGANINCPRGGGRFAAGVSCVETAPDLVLNAALVEQTTYLEDRPMFMLQCAHEEQCLSSSADRTSPTTGYRRLLRFSSQIHNNGQADFRPKTGRHSWIWHDCHRHYHSMEVFTHYDLLSLNGTKVAEGHKASFCLEDSECETDVQKQYACANFGEQGITVGCWDVYRHDIDCQWVDITDVAPGDYFFQVIINPNQEVAESDYTNNIMKCRCRYDGHRIWMYNCHIGGSYSTETEEKFEHFSGLMNNQLSTR</sequence>
<name>LOXL2_XENTR</name>
<dbReference type="EC" id="1.4.3.13" evidence="4"/>
<dbReference type="EMBL" id="AAMC01014210">
    <property type="status" value="NOT_ANNOTATED_CDS"/>
    <property type="molecule type" value="Genomic_DNA"/>
</dbReference>
<dbReference type="EMBL" id="AAMC01014211">
    <property type="status" value="NOT_ANNOTATED_CDS"/>
    <property type="molecule type" value="Genomic_DNA"/>
</dbReference>
<dbReference type="EMBL" id="AAMC01014212">
    <property type="status" value="NOT_ANNOTATED_CDS"/>
    <property type="molecule type" value="Genomic_DNA"/>
</dbReference>
<dbReference type="EMBL" id="AAMC01014213">
    <property type="status" value="NOT_ANNOTATED_CDS"/>
    <property type="molecule type" value="Genomic_DNA"/>
</dbReference>
<dbReference type="EMBL" id="AAMC01014214">
    <property type="status" value="NOT_ANNOTATED_CDS"/>
    <property type="molecule type" value="Genomic_DNA"/>
</dbReference>
<dbReference type="EMBL" id="AAMC01014215">
    <property type="status" value="NOT_ANNOTATED_CDS"/>
    <property type="molecule type" value="Genomic_DNA"/>
</dbReference>
<dbReference type="EMBL" id="AAMC01014216">
    <property type="status" value="NOT_ANNOTATED_CDS"/>
    <property type="molecule type" value="Genomic_DNA"/>
</dbReference>
<dbReference type="EMBL" id="AAMC01014217">
    <property type="status" value="NOT_ANNOTATED_CDS"/>
    <property type="molecule type" value="Genomic_DNA"/>
</dbReference>
<dbReference type="EMBL" id="AAMC01014218">
    <property type="status" value="NOT_ANNOTATED_CDS"/>
    <property type="molecule type" value="Genomic_DNA"/>
</dbReference>
<dbReference type="EMBL" id="AAMC01014219">
    <property type="status" value="NOT_ANNOTATED_CDS"/>
    <property type="molecule type" value="Genomic_DNA"/>
</dbReference>
<dbReference type="EMBL" id="AAMC01014220">
    <property type="status" value="NOT_ANNOTATED_CDS"/>
    <property type="molecule type" value="Genomic_DNA"/>
</dbReference>
<dbReference type="EMBL" id="AAMC01014221">
    <property type="status" value="NOT_ANNOTATED_CDS"/>
    <property type="molecule type" value="Genomic_DNA"/>
</dbReference>
<dbReference type="EMBL" id="AAMC01014222">
    <property type="status" value="NOT_ANNOTATED_CDS"/>
    <property type="molecule type" value="Genomic_DNA"/>
</dbReference>
<dbReference type="EMBL" id="AAMC01014223">
    <property type="status" value="NOT_ANNOTATED_CDS"/>
    <property type="molecule type" value="Genomic_DNA"/>
</dbReference>
<dbReference type="EMBL" id="AAMC01014224">
    <property type="status" value="NOT_ANNOTATED_CDS"/>
    <property type="molecule type" value="Genomic_DNA"/>
</dbReference>
<dbReference type="EMBL" id="AAMC01014225">
    <property type="status" value="NOT_ANNOTATED_CDS"/>
    <property type="molecule type" value="Genomic_DNA"/>
</dbReference>
<dbReference type="EMBL" id="AAMC01014226">
    <property type="status" value="NOT_ANNOTATED_CDS"/>
    <property type="molecule type" value="Genomic_DNA"/>
</dbReference>
<dbReference type="EMBL" id="BC167947">
    <property type="protein sequence ID" value="AAI67947.1"/>
    <property type="molecule type" value="mRNA"/>
</dbReference>
<dbReference type="RefSeq" id="NP_001135520.1">
    <property type="nucleotide sequence ID" value="NM_001142048.1"/>
</dbReference>
<dbReference type="SMR" id="B4F6N6"/>
<dbReference type="FunCoup" id="B4F6N6">
    <property type="interactions" value="564"/>
</dbReference>
<dbReference type="GlyCosmos" id="B4F6N6">
    <property type="glycosylation" value="3 sites, No reported glycans"/>
</dbReference>
<dbReference type="PaxDb" id="8364-ENSXETP00000016976"/>
<dbReference type="GeneID" id="100216062"/>
<dbReference type="KEGG" id="xtr:100216062"/>
<dbReference type="AGR" id="Xenbase:XB-GENE-1010775"/>
<dbReference type="CTD" id="4017"/>
<dbReference type="Xenbase" id="XB-GENE-1010775">
    <property type="gene designation" value="loxl2"/>
</dbReference>
<dbReference type="eggNOG" id="ENOG502QSX8">
    <property type="taxonomic scope" value="Eukaryota"/>
</dbReference>
<dbReference type="InParanoid" id="B4F6N6"/>
<dbReference type="OrthoDB" id="547291at2759"/>
<dbReference type="Proteomes" id="UP000008143">
    <property type="component" value="Chromosome 3"/>
</dbReference>
<dbReference type="GO" id="GO:0005604">
    <property type="term" value="C:basement membrane"/>
    <property type="evidence" value="ECO:0000250"/>
    <property type="project" value="UniProtKB"/>
</dbReference>
<dbReference type="GO" id="GO:0000785">
    <property type="term" value="C:chromatin"/>
    <property type="evidence" value="ECO:0000250"/>
    <property type="project" value="UniProtKB"/>
</dbReference>
<dbReference type="GO" id="GO:0005783">
    <property type="term" value="C:endoplasmic reticulum"/>
    <property type="evidence" value="ECO:0000250"/>
    <property type="project" value="UniProtKB"/>
</dbReference>
<dbReference type="GO" id="GO:0005615">
    <property type="term" value="C:extracellular space"/>
    <property type="evidence" value="ECO:0000250"/>
    <property type="project" value="UniProtKB"/>
</dbReference>
<dbReference type="GO" id="GO:0016020">
    <property type="term" value="C:membrane"/>
    <property type="evidence" value="ECO:0007669"/>
    <property type="project" value="InterPro"/>
</dbReference>
<dbReference type="GO" id="GO:0005634">
    <property type="term" value="C:nucleus"/>
    <property type="evidence" value="ECO:0000250"/>
    <property type="project" value="UniProtKB"/>
</dbReference>
<dbReference type="GO" id="GO:0005509">
    <property type="term" value="F:calcium ion binding"/>
    <property type="evidence" value="ECO:0000250"/>
    <property type="project" value="UniProtKB"/>
</dbReference>
<dbReference type="GO" id="GO:0005507">
    <property type="term" value="F:copper ion binding"/>
    <property type="evidence" value="ECO:0000250"/>
    <property type="project" value="UniProtKB"/>
</dbReference>
<dbReference type="GO" id="GO:0070492">
    <property type="term" value="F:oligosaccharide binding"/>
    <property type="evidence" value="ECO:0000250"/>
    <property type="project" value="UniProtKB"/>
</dbReference>
<dbReference type="GO" id="GO:0004720">
    <property type="term" value="F:protein-lysine 6-oxidase activity"/>
    <property type="evidence" value="ECO:0000250"/>
    <property type="project" value="UniProtKB"/>
</dbReference>
<dbReference type="GO" id="GO:0030199">
    <property type="term" value="P:collagen fibril organization"/>
    <property type="evidence" value="ECO:0000250"/>
    <property type="project" value="UniProtKB"/>
</dbReference>
<dbReference type="GO" id="GO:0043542">
    <property type="term" value="P:endothelial cell migration"/>
    <property type="evidence" value="ECO:0000250"/>
    <property type="project" value="UniProtKB"/>
</dbReference>
<dbReference type="GO" id="GO:0001935">
    <property type="term" value="P:endothelial cell proliferation"/>
    <property type="evidence" value="ECO:0000250"/>
    <property type="project" value="UniProtKB"/>
</dbReference>
<dbReference type="GO" id="GO:0001837">
    <property type="term" value="P:epithelial to mesenchymal transition"/>
    <property type="evidence" value="ECO:0000250"/>
    <property type="project" value="UniProtKB"/>
</dbReference>
<dbReference type="GO" id="GO:0070828">
    <property type="term" value="P:heterochromatin organization"/>
    <property type="evidence" value="ECO:0000250"/>
    <property type="project" value="UniProtKB"/>
</dbReference>
<dbReference type="GO" id="GO:0045892">
    <property type="term" value="P:negative regulation of DNA-templated transcription"/>
    <property type="evidence" value="ECO:0000250"/>
    <property type="project" value="UniProtKB"/>
</dbReference>
<dbReference type="GO" id="GO:1902455">
    <property type="term" value="P:negative regulation of stem cell population maintenance"/>
    <property type="evidence" value="ECO:0000250"/>
    <property type="project" value="UniProtKB"/>
</dbReference>
<dbReference type="GO" id="GO:0000122">
    <property type="term" value="P:negative regulation of transcription by RNA polymerase II"/>
    <property type="evidence" value="ECO:0000250"/>
    <property type="project" value="UniProtKB"/>
</dbReference>
<dbReference type="GO" id="GO:0018057">
    <property type="term" value="P:peptidyl-lysine oxidation"/>
    <property type="evidence" value="ECO:0000250"/>
    <property type="project" value="UniProtKB"/>
</dbReference>
<dbReference type="GO" id="GO:0032332">
    <property type="term" value="P:positive regulation of chondrocyte differentiation"/>
    <property type="evidence" value="ECO:0000250"/>
    <property type="project" value="UniProtKB"/>
</dbReference>
<dbReference type="GO" id="GO:0010718">
    <property type="term" value="P:positive regulation of epithelial to mesenchymal transition"/>
    <property type="evidence" value="ECO:0000250"/>
    <property type="project" value="UniProtKB"/>
</dbReference>
<dbReference type="GO" id="GO:0036211">
    <property type="term" value="P:protein modification process"/>
    <property type="evidence" value="ECO:0000250"/>
    <property type="project" value="UniProtKB"/>
</dbReference>
<dbReference type="GO" id="GO:0046688">
    <property type="term" value="P:response to copper ion"/>
    <property type="evidence" value="ECO:0000250"/>
    <property type="project" value="UniProtKB"/>
</dbReference>
<dbReference type="GO" id="GO:0001666">
    <property type="term" value="P:response to hypoxia"/>
    <property type="evidence" value="ECO:0000250"/>
    <property type="project" value="UniProtKB"/>
</dbReference>
<dbReference type="GO" id="GO:0002040">
    <property type="term" value="P:sprouting angiogenesis"/>
    <property type="evidence" value="ECO:0000250"/>
    <property type="project" value="UniProtKB"/>
</dbReference>
<dbReference type="FunFam" id="3.10.250.10:FF:000001">
    <property type="entry name" value="Lysyl oxidase 4 isoform X1"/>
    <property type="match status" value="2"/>
</dbReference>
<dbReference type="FunFam" id="3.10.250.10:FF:000008">
    <property type="entry name" value="Lysyl oxidase homolog 2"/>
    <property type="match status" value="1"/>
</dbReference>
<dbReference type="FunFam" id="3.10.250.10:FF:000014">
    <property type="entry name" value="Lysyl oxidase homolog 2"/>
    <property type="match status" value="1"/>
</dbReference>
<dbReference type="Gene3D" id="3.10.250.10">
    <property type="entry name" value="SRCR-like domain"/>
    <property type="match status" value="4"/>
</dbReference>
<dbReference type="InterPro" id="IPR050912">
    <property type="entry name" value="LOX-like_protein"/>
</dbReference>
<dbReference type="InterPro" id="IPR001695">
    <property type="entry name" value="Lysyl_oxidase"/>
</dbReference>
<dbReference type="InterPro" id="IPR019828">
    <property type="entry name" value="Lysyl_oxidase_CS"/>
</dbReference>
<dbReference type="InterPro" id="IPR001190">
    <property type="entry name" value="SRCR"/>
</dbReference>
<dbReference type="InterPro" id="IPR036772">
    <property type="entry name" value="SRCR-like_dom_sf"/>
</dbReference>
<dbReference type="PANTHER" id="PTHR45817:SF1">
    <property type="entry name" value="LYSYL OXIDASE HOMOLOG 2"/>
    <property type="match status" value="1"/>
</dbReference>
<dbReference type="PANTHER" id="PTHR45817">
    <property type="entry name" value="LYSYL OXIDASE-LIKE-RELATED"/>
    <property type="match status" value="1"/>
</dbReference>
<dbReference type="Pfam" id="PF01186">
    <property type="entry name" value="Lysyl_oxidase"/>
    <property type="match status" value="1"/>
</dbReference>
<dbReference type="Pfam" id="PF00530">
    <property type="entry name" value="SRCR"/>
    <property type="match status" value="4"/>
</dbReference>
<dbReference type="PRINTS" id="PR00074">
    <property type="entry name" value="LYSYLOXIDASE"/>
</dbReference>
<dbReference type="PRINTS" id="PR00258">
    <property type="entry name" value="SPERACTRCPTR"/>
</dbReference>
<dbReference type="SMART" id="SM00202">
    <property type="entry name" value="SR"/>
    <property type="match status" value="4"/>
</dbReference>
<dbReference type="SUPFAM" id="SSF56487">
    <property type="entry name" value="SRCR-like"/>
    <property type="match status" value="4"/>
</dbReference>
<dbReference type="PROSITE" id="PS00926">
    <property type="entry name" value="LYSYL_OXIDASE"/>
    <property type="match status" value="1"/>
</dbReference>
<dbReference type="PROSITE" id="PS00420">
    <property type="entry name" value="SRCR_1"/>
    <property type="match status" value="1"/>
</dbReference>
<dbReference type="PROSITE" id="PS50287">
    <property type="entry name" value="SRCR_2"/>
    <property type="match status" value="4"/>
</dbReference>
<protein>
    <recommendedName>
        <fullName>Lysyl oxidase homolog 2</fullName>
        <ecNumber evidence="4">1.4.3.13</ecNumber>
    </recommendedName>
    <alternativeName>
        <fullName>Lysyl oxidase-like protein 2</fullName>
    </alternativeName>
</protein>
<accession>B4F6N6</accession>
<accession>F7END9</accession>
<comment type="function">
    <text evidence="3 4">Mediates the post-translational oxidative deamination of lysine residues on target proteins leading to the formation of deaminated lysine (allysine). Acts as a transcription corepressor and specifically mediates deamination of trimethylated 'Lys-4' of histone H3 (H3K4me3), a specific tag for epigenetic transcriptional activation. Shows no activity against histone H3 when it is trimethylated on 'Lys-9' (H3K9me3) or 'Lys-27' (H3K27me3) or when 'Lys-4' is monomethylated (H3K4me1) or dimethylated (H3K4me2). Also mediates deamination of methylated TAF10, a member of the transcription factor IID (TFIID) complex, which induces release of TAF10 from promoters, leading to inhibition of TFIID-dependent transcription. LOXL2-mediated deamination of TAF10 results in transcriptional repression of genes required for embryonic stem cell pluripotency. Involved in epithelial to mesenchymal transition (EMT) and participates in repression of E-cadherin, probably by mediating deamination of histone H3. When secreted into the extracellular matrix, promotes cross-linking of extracellular matrix proteins by mediating oxidative deamination of peptidyl lysine residues in precursors to fibrous collagen and elastin. Acts as a regulator of sprouting angiogenesis, probably via collagen IV scaffolding. Acts as a regulator of chondrocyte differentiation, probably by regulating expression of factors that control chondrocyte differentiation.</text>
</comment>
<comment type="catalytic activity">
    <reaction evidence="4">
        <text>L-lysyl-[protein] + O2 + H2O = (S)-2-amino-6-oxohexanoyl-[protein] + H2O2 + NH4(+)</text>
        <dbReference type="Rhea" id="RHEA:24544"/>
        <dbReference type="Rhea" id="RHEA-COMP:9752"/>
        <dbReference type="Rhea" id="RHEA-COMP:12448"/>
        <dbReference type="ChEBI" id="CHEBI:15377"/>
        <dbReference type="ChEBI" id="CHEBI:15379"/>
        <dbReference type="ChEBI" id="CHEBI:16240"/>
        <dbReference type="ChEBI" id="CHEBI:28938"/>
        <dbReference type="ChEBI" id="CHEBI:29969"/>
        <dbReference type="ChEBI" id="CHEBI:131803"/>
        <dbReference type="EC" id="1.4.3.13"/>
    </reaction>
</comment>
<comment type="cofactor">
    <cofactor evidence="4">
        <name>Cu cation</name>
        <dbReference type="ChEBI" id="CHEBI:23378"/>
    </cofactor>
</comment>
<comment type="cofactor">
    <cofactor evidence="4">
        <name>lysine tyrosylquinone residue</name>
        <dbReference type="ChEBI" id="CHEBI:20489"/>
    </cofactor>
    <text evidence="2 4">Contains 1 lysine tyrosylquinone.</text>
</comment>
<comment type="subcellular location">
    <subcellularLocation>
        <location evidence="4">Secreted</location>
        <location evidence="4">Extracellular space</location>
        <location evidence="4">Extracellular matrix</location>
        <location evidence="4">Basement membrane</location>
    </subcellularLocation>
    <subcellularLocation>
        <location evidence="4">Nucleus</location>
    </subcellularLocation>
    <subcellularLocation>
        <location evidence="4">Chromosome</location>
    </subcellularLocation>
    <subcellularLocation>
        <location evidence="4">Endoplasmic reticulum</location>
    </subcellularLocation>
    <text evidence="4">Associated with chromatin. It is unclear how LOXL2 is nuclear as it contains a signal sequence and has been shown to be secreted. However, a number of reports confirm its intracellular location and its key role in transcription regulation.</text>
</comment>
<comment type="PTM">
    <text evidence="4">The lysine tyrosylquinone cross-link (LTQ) is generated by condensation of the epsilon-amino group of a lysine with a topaquinone produced by oxidation of tyrosine.</text>
</comment>
<comment type="similarity">
    <text evidence="7">Belongs to the lysyl oxidase family.</text>
</comment>
<organism>
    <name type="scientific">Xenopus tropicalis</name>
    <name type="common">Western clawed frog</name>
    <name type="synonym">Silurana tropicalis</name>
    <dbReference type="NCBI Taxonomy" id="8364"/>
    <lineage>
        <taxon>Eukaryota</taxon>
        <taxon>Metazoa</taxon>
        <taxon>Chordata</taxon>
        <taxon>Craniata</taxon>
        <taxon>Vertebrata</taxon>
        <taxon>Euteleostomi</taxon>
        <taxon>Amphibia</taxon>
        <taxon>Batrachia</taxon>
        <taxon>Anura</taxon>
        <taxon>Pipoidea</taxon>
        <taxon>Pipidae</taxon>
        <taxon>Xenopodinae</taxon>
        <taxon>Xenopus</taxon>
        <taxon>Silurana</taxon>
    </lineage>
</organism>
<gene>
    <name type="primary">loxl2</name>
</gene>
<reference key="1">
    <citation type="journal article" date="2010" name="Science">
        <title>The genome of the Western clawed frog Xenopus tropicalis.</title>
        <authorList>
            <person name="Hellsten U."/>
            <person name="Harland R.M."/>
            <person name="Gilchrist M.J."/>
            <person name="Hendrix D."/>
            <person name="Jurka J."/>
            <person name="Kapitonov V."/>
            <person name="Ovcharenko I."/>
            <person name="Putnam N.H."/>
            <person name="Shu S."/>
            <person name="Taher L."/>
            <person name="Blitz I.L."/>
            <person name="Blumberg B."/>
            <person name="Dichmann D.S."/>
            <person name="Dubchak I."/>
            <person name="Amaya E."/>
            <person name="Detter J.C."/>
            <person name="Fletcher R."/>
            <person name="Gerhard D.S."/>
            <person name="Goodstein D."/>
            <person name="Graves T."/>
            <person name="Grigoriev I.V."/>
            <person name="Grimwood J."/>
            <person name="Kawashima T."/>
            <person name="Lindquist E."/>
            <person name="Lucas S.M."/>
            <person name="Mead P.E."/>
            <person name="Mitros T."/>
            <person name="Ogino H."/>
            <person name="Ohta Y."/>
            <person name="Poliakov A.V."/>
            <person name="Pollet N."/>
            <person name="Robert J."/>
            <person name="Salamov A."/>
            <person name="Sater A.K."/>
            <person name="Schmutz J."/>
            <person name="Terry A."/>
            <person name="Vize P.D."/>
            <person name="Warren W.C."/>
            <person name="Wells D."/>
            <person name="Wills A."/>
            <person name="Wilson R.K."/>
            <person name="Zimmerman L.B."/>
            <person name="Zorn A.M."/>
            <person name="Grainger R."/>
            <person name="Grammer T."/>
            <person name="Khokha M.K."/>
            <person name="Richardson P.M."/>
            <person name="Rokhsar D.S."/>
        </authorList>
    </citation>
    <scope>NUCLEOTIDE SEQUENCE [LARGE SCALE GENOMIC DNA]</scope>
</reference>
<reference key="2">
    <citation type="submission" date="2008-07" db="EMBL/GenBank/DDBJ databases">
        <authorList>
            <consortium name="NIH - Xenopus Gene Collection (XGC) project"/>
        </authorList>
    </citation>
    <scope>NUCLEOTIDE SEQUENCE [LARGE SCALE MRNA]</scope>
    <source>
        <strain>N6</strain>
        <tissue>Fat body</tissue>
    </source>
</reference>